<protein>
    <recommendedName>
        <fullName>Asparagine synthetase [glutamine-hydrolyzing] 1</fullName>
        <ecNumber>6.3.5.4</ecNumber>
    </recommendedName>
    <alternativeName>
        <fullName>Glutamine-dependent asparagine synthetase 1</fullName>
    </alternativeName>
</protein>
<sequence length="572" mass="64470">MCGIFAAFRHEDVHRYKPKALQLSKRIRHRGPDWSGNAIKNSTIFVHERLAIVGVESGAQPITSSDGEYMLCVNGEIYNHIQLREECADYEFGTLSDCEPIIPMYLKHDIDAPKYLDGMFAWTLYDAKQDRIVAARDPIGITTLYMGRSSASPKTVYFASELKCLTDDCDTITAFPPGHVYDSKTDKITRYFTPDWLDEKRIPSTPIDYMAIRHSLEKAVRKRLMAEVPYGVLLSGGLDSSLIASIAARETAKATNDVEPSTYDSKARHLAGIDDDGKLHTAGWTSLHSFAIGLPNAPDLQAARKVAKFIGSIHHEHTFTLQEGLDALDDVIYHLETYDVTTIRASTPMFLLSRKIKAQGVKMVLSGEGSDEIFGGYLYFAQAPSAAEFHTESVQRVKNLHLADCLRANKSTMAWGLEARVPFLDREFLQLCMNIDPNEKMIKPKEGRIEKYILRKAFDTTGEPDAKPYLPEEILWRQKEQFSDGVGYSWIDGLKDTAEAVISDEMFASPKAEWGSDIPTTKEAFWYRLKFDALFPQKTVADTVMRWIPKADWGCAEDPSGRYAQIHEKHIE</sequence>
<comment type="catalytic activity">
    <reaction>
        <text>L-aspartate + L-glutamine + ATP + H2O = L-asparagine + L-glutamate + AMP + diphosphate + H(+)</text>
        <dbReference type="Rhea" id="RHEA:12228"/>
        <dbReference type="ChEBI" id="CHEBI:15377"/>
        <dbReference type="ChEBI" id="CHEBI:15378"/>
        <dbReference type="ChEBI" id="CHEBI:29985"/>
        <dbReference type="ChEBI" id="CHEBI:29991"/>
        <dbReference type="ChEBI" id="CHEBI:30616"/>
        <dbReference type="ChEBI" id="CHEBI:33019"/>
        <dbReference type="ChEBI" id="CHEBI:58048"/>
        <dbReference type="ChEBI" id="CHEBI:58359"/>
        <dbReference type="ChEBI" id="CHEBI:456215"/>
        <dbReference type="EC" id="6.3.5.4"/>
    </reaction>
</comment>
<comment type="pathway">
    <text>Amino-acid biosynthesis; L-asparagine biosynthesis; L-asparagine from L-aspartate (L-Gln route): step 1/1.</text>
</comment>
<comment type="interaction">
    <interactant intactId="EBI-3043">
        <id>P49089</id>
    </interactant>
    <interactant intactId="EBI-3048">
        <id>P49090</id>
        <label>ASN2</label>
    </interactant>
    <organismsDiffer>false</organismsDiffer>
    <experiments>2</experiments>
</comment>
<reference key="1">
    <citation type="journal article" date="1996" name="Mol. Microbiol.">
        <title>Cloning of the ASN1 and ASN2 genes encoding asparagine synthetases in Saccharomyces cerevisiae: differential regulation by the CCAAT-box-binding factor.</title>
        <authorList>
            <person name="Dang V.D."/>
            <person name="Valens M."/>
            <person name="Bolotin-Fukuhara M."/>
            <person name="Daignan-Fornier B."/>
        </authorList>
    </citation>
    <scope>NUCLEOTIDE SEQUENCE [GENOMIC DNA]</scope>
</reference>
<reference key="2">
    <citation type="journal article" date="1997" name="Nature">
        <title>The nucleotide sequence of Saccharomyces cerevisiae chromosome XVI.</title>
        <authorList>
            <person name="Bussey H."/>
            <person name="Storms R.K."/>
            <person name="Ahmed A."/>
            <person name="Albermann K."/>
            <person name="Allen E."/>
            <person name="Ansorge W."/>
            <person name="Araujo R."/>
            <person name="Aparicio A."/>
            <person name="Barrell B.G."/>
            <person name="Badcock K."/>
            <person name="Benes V."/>
            <person name="Botstein D."/>
            <person name="Bowman S."/>
            <person name="Brueckner M."/>
            <person name="Carpenter J."/>
            <person name="Cherry J.M."/>
            <person name="Chung E."/>
            <person name="Churcher C.M."/>
            <person name="Coster F."/>
            <person name="Davis K."/>
            <person name="Davis R.W."/>
            <person name="Dietrich F.S."/>
            <person name="Delius H."/>
            <person name="DiPaolo T."/>
            <person name="Dubois E."/>
            <person name="Duesterhoeft A."/>
            <person name="Duncan M."/>
            <person name="Floeth M."/>
            <person name="Fortin N."/>
            <person name="Friesen J.D."/>
            <person name="Fritz C."/>
            <person name="Goffeau A."/>
            <person name="Hall J."/>
            <person name="Hebling U."/>
            <person name="Heumann K."/>
            <person name="Hilbert H."/>
            <person name="Hillier L.W."/>
            <person name="Hunicke-Smith S."/>
            <person name="Hyman R.W."/>
            <person name="Johnston M."/>
            <person name="Kalman S."/>
            <person name="Kleine K."/>
            <person name="Komp C."/>
            <person name="Kurdi O."/>
            <person name="Lashkari D."/>
            <person name="Lew H."/>
            <person name="Lin A."/>
            <person name="Lin D."/>
            <person name="Louis E.J."/>
            <person name="Marathe R."/>
            <person name="Messenguy F."/>
            <person name="Mewes H.-W."/>
            <person name="Mirtipati S."/>
            <person name="Moestl D."/>
            <person name="Mueller-Auer S."/>
            <person name="Namath A."/>
            <person name="Nentwich U."/>
            <person name="Oefner P."/>
            <person name="Pearson D."/>
            <person name="Petel F.X."/>
            <person name="Pohl T.M."/>
            <person name="Purnelle B."/>
            <person name="Rajandream M.A."/>
            <person name="Rechmann S."/>
            <person name="Rieger M."/>
            <person name="Riles L."/>
            <person name="Roberts D."/>
            <person name="Schaefer M."/>
            <person name="Scharfe M."/>
            <person name="Scherens B."/>
            <person name="Schramm S."/>
            <person name="Schroeder M."/>
            <person name="Sdicu A.-M."/>
            <person name="Tettelin H."/>
            <person name="Urrestarazu L.A."/>
            <person name="Ushinsky S."/>
            <person name="Vierendeels F."/>
            <person name="Vissers S."/>
            <person name="Voss H."/>
            <person name="Walsh S.V."/>
            <person name="Wambutt R."/>
            <person name="Wang Y."/>
            <person name="Wedler E."/>
            <person name="Wedler H."/>
            <person name="Winnett E."/>
            <person name="Zhong W.-W."/>
            <person name="Zollner A."/>
            <person name="Vo D.H."/>
            <person name="Hani J."/>
        </authorList>
    </citation>
    <scope>NUCLEOTIDE SEQUENCE [LARGE SCALE GENOMIC DNA]</scope>
    <source>
        <strain>ATCC 204508 / S288c</strain>
    </source>
</reference>
<reference key="3">
    <citation type="journal article" date="2014" name="G3 (Bethesda)">
        <title>The reference genome sequence of Saccharomyces cerevisiae: Then and now.</title>
        <authorList>
            <person name="Engel S.R."/>
            <person name="Dietrich F.S."/>
            <person name="Fisk D.G."/>
            <person name="Binkley G."/>
            <person name="Balakrishnan R."/>
            <person name="Costanzo M.C."/>
            <person name="Dwight S.S."/>
            <person name="Hitz B.C."/>
            <person name="Karra K."/>
            <person name="Nash R.S."/>
            <person name="Weng S."/>
            <person name="Wong E.D."/>
            <person name="Lloyd P."/>
            <person name="Skrzypek M.S."/>
            <person name="Miyasato S.R."/>
            <person name="Simison M."/>
            <person name="Cherry J.M."/>
        </authorList>
    </citation>
    <scope>GENOME REANNOTATION</scope>
    <source>
        <strain>ATCC 204508 / S288c</strain>
    </source>
</reference>
<reference key="4">
    <citation type="journal article" date="2008" name="Mol. Cell. Proteomics">
        <title>A multidimensional chromatography technology for in-depth phosphoproteome analysis.</title>
        <authorList>
            <person name="Albuquerque C.P."/>
            <person name="Smolka M.B."/>
            <person name="Payne S.H."/>
            <person name="Bafna V."/>
            <person name="Eng J."/>
            <person name="Zhou H."/>
        </authorList>
    </citation>
    <scope>PHOSPHORYLATION [LARGE SCALE ANALYSIS] AT SER-265 AND SER-509</scope>
    <scope>IDENTIFICATION BY MASS SPECTROMETRY [LARGE SCALE ANALYSIS]</scope>
</reference>
<reference key="5">
    <citation type="journal article" date="2012" name="Proc. Natl. Acad. Sci. U.S.A.">
        <title>N-terminal acetylome analyses and functional insights of the N-terminal acetyltransferase NatB.</title>
        <authorList>
            <person name="Van Damme P."/>
            <person name="Lasa M."/>
            <person name="Polevoda B."/>
            <person name="Gazquez C."/>
            <person name="Elosegui-Artola A."/>
            <person name="Kim D.S."/>
            <person name="De Juan-Pardo E."/>
            <person name="Demeyer K."/>
            <person name="Hole K."/>
            <person name="Larrea E."/>
            <person name="Timmerman E."/>
            <person name="Prieto J."/>
            <person name="Arnesen T."/>
            <person name="Sherman F."/>
            <person name="Gevaert K."/>
            <person name="Aldabe R."/>
        </authorList>
    </citation>
    <scope>IDENTIFICATION BY MASS SPECTROMETRY [LARGE SCALE ANALYSIS]</scope>
</reference>
<organism>
    <name type="scientific">Saccharomyces cerevisiae (strain ATCC 204508 / S288c)</name>
    <name type="common">Baker's yeast</name>
    <dbReference type="NCBI Taxonomy" id="559292"/>
    <lineage>
        <taxon>Eukaryota</taxon>
        <taxon>Fungi</taxon>
        <taxon>Dikarya</taxon>
        <taxon>Ascomycota</taxon>
        <taxon>Saccharomycotina</taxon>
        <taxon>Saccharomycetes</taxon>
        <taxon>Saccharomycetales</taxon>
        <taxon>Saccharomycetaceae</taxon>
        <taxon>Saccharomyces</taxon>
    </lineage>
</organism>
<evidence type="ECO:0000250" key="1"/>
<evidence type="ECO:0000255" key="2">
    <source>
        <dbReference type="PROSITE-ProRule" id="PRU00609"/>
    </source>
</evidence>
<evidence type="ECO:0007744" key="3">
    <source>
    </source>
</evidence>
<gene>
    <name type="primary">ASN1</name>
    <name type="ordered locus">YPR145W</name>
    <name type="ORF">P9659.3</name>
</gene>
<proteinExistence type="evidence at protein level"/>
<name>ASNS1_YEAST</name>
<dbReference type="EC" id="6.3.5.4"/>
<dbReference type="EMBL" id="Z48675">
    <property type="protein sequence ID" value="CAA88594.1"/>
    <property type="molecule type" value="Genomic_DNA"/>
</dbReference>
<dbReference type="EMBL" id="U40829">
    <property type="protein sequence ID" value="AAB68284.1"/>
    <property type="molecule type" value="Genomic_DNA"/>
</dbReference>
<dbReference type="EMBL" id="BK006949">
    <property type="protein sequence ID" value="DAA11558.1"/>
    <property type="molecule type" value="Genomic_DNA"/>
</dbReference>
<dbReference type="PIR" id="S52694">
    <property type="entry name" value="S52694"/>
</dbReference>
<dbReference type="RefSeq" id="NP_015471.1">
    <property type="nucleotide sequence ID" value="NM_001184242.1"/>
</dbReference>
<dbReference type="SMR" id="P49089"/>
<dbReference type="BioGRID" id="36314">
    <property type="interactions" value="86"/>
</dbReference>
<dbReference type="DIP" id="DIP-3810N"/>
<dbReference type="FunCoup" id="P49089">
    <property type="interactions" value="705"/>
</dbReference>
<dbReference type="IntAct" id="P49089">
    <property type="interactions" value="5"/>
</dbReference>
<dbReference type="STRING" id="4932.YPR145W"/>
<dbReference type="iPTMnet" id="P49089"/>
<dbReference type="PaxDb" id="4932-YPR145W"/>
<dbReference type="PeptideAtlas" id="P49089"/>
<dbReference type="EnsemblFungi" id="YPR145W_mRNA">
    <property type="protein sequence ID" value="YPR145W"/>
    <property type="gene ID" value="YPR145W"/>
</dbReference>
<dbReference type="GeneID" id="856268"/>
<dbReference type="KEGG" id="sce:YPR145W"/>
<dbReference type="AGR" id="SGD:S000006349"/>
<dbReference type="SGD" id="S000006349">
    <property type="gene designation" value="ASN1"/>
</dbReference>
<dbReference type="VEuPathDB" id="FungiDB:YPR145W"/>
<dbReference type="eggNOG" id="KOG0571">
    <property type="taxonomic scope" value="Eukaryota"/>
</dbReference>
<dbReference type="GeneTree" id="ENSGT00940000171863"/>
<dbReference type="HOGENOM" id="CLU_014658_2_2_1"/>
<dbReference type="InParanoid" id="P49089"/>
<dbReference type="OMA" id="HYLNFHA"/>
<dbReference type="OrthoDB" id="409189at2759"/>
<dbReference type="BioCyc" id="YEAST:YPR145W-MONOMER"/>
<dbReference type="Reactome" id="R-SCE-8963693">
    <property type="pathway name" value="Aspartate and asparagine metabolism"/>
</dbReference>
<dbReference type="UniPathway" id="UPA00134">
    <property type="reaction ID" value="UER00195"/>
</dbReference>
<dbReference type="BioGRID-ORCS" id="856268">
    <property type="hits" value="7 hits in 10 CRISPR screens"/>
</dbReference>
<dbReference type="PRO" id="PR:P49089"/>
<dbReference type="Proteomes" id="UP000002311">
    <property type="component" value="Chromosome XVI"/>
</dbReference>
<dbReference type="RNAct" id="P49089">
    <property type="molecule type" value="protein"/>
</dbReference>
<dbReference type="GO" id="GO:0005737">
    <property type="term" value="C:cytoplasm"/>
    <property type="evidence" value="ECO:0007005"/>
    <property type="project" value="SGD"/>
</dbReference>
<dbReference type="GO" id="GO:0005829">
    <property type="term" value="C:cytosol"/>
    <property type="evidence" value="ECO:0000318"/>
    <property type="project" value="GO_Central"/>
</dbReference>
<dbReference type="GO" id="GO:0004066">
    <property type="term" value="F:asparagine synthase (glutamine-hydrolyzing) activity"/>
    <property type="evidence" value="ECO:0000314"/>
    <property type="project" value="SGD"/>
</dbReference>
<dbReference type="GO" id="GO:0005524">
    <property type="term" value="F:ATP binding"/>
    <property type="evidence" value="ECO:0007669"/>
    <property type="project" value="UniProtKB-KW"/>
</dbReference>
<dbReference type="GO" id="GO:0006529">
    <property type="term" value="P:asparagine biosynthetic process"/>
    <property type="evidence" value="ECO:0000316"/>
    <property type="project" value="SGD"/>
</dbReference>
<dbReference type="GO" id="GO:0070981">
    <property type="term" value="P:L-asparagine biosynthetic process"/>
    <property type="evidence" value="ECO:0007669"/>
    <property type="project" value="UniProtKB-UniPathway"/>
</dbReference>
<dbReference type="CDD" id="cd01991">
    <property type="entry name" value="Asn_synthase_B_C"/>
    <property type="match status" value="1"/>
</dbReference>
<dbReference type="CDD" id="cd00712">
    <property type="entry name" value="AsnB"/>
    <property type="match status" value="1"/>
</dbReference>
<dbReference type="FunFam" id="3.40.50.620:FF:000031">
    <property type="entry name" value="Asparagine synthase B"/>
    <property type="match status" value="1"/>
</dbReference>
<dbReference type="FunFam" id="3.60.20.10:FF:000050">
    <property type="entry name" value="Asparagine synthetase 2"/>
    <property type="match status" value="1"/>
</dbReference>
<dbReference type="Gene3D" id="3.60.20.10">
    <property type="entry name" value="Glutamine Phosphoribosylpyrophosphate, subunit 1, domain 1"/>
    <property type="match status" value="1"/>
</dbReference>
<dbReference type="Gene3D" id="3.40.50.620">
    <property type="entry name" value="HUPs"/>
    <property type="match status" value="1"/>
</dbReference>
<dbReference type="InterPro" id="IPR006426">
    <property type="entry name" value="Asn_synth_AEB"/>
</dbReference>
<dbReference type="InterPro" id="IPR001962">
    <property type="entry name" value="Asn_synthase"/>
</dbReference>
<dbReference type="InterPro" id="IPR050795">
    <property type="entry name" value="Asn_Synthetase"/>
</dbReference>
<dbReference type="InterPro" id="IPR033738">
    <property type="entry name" value="AsnB_N"/>
</dbReference>
<dbReference type="InterPro" id="IPR017932">
    <property type="entry name" value="GATase_2_dom"/>
</dbReference>
<dbReference type="InterPro" id="IPR029055">
    <property type="entry name" value="Ntn_hydrolases_N"/>
</dbReference>
<dbReference type="InterPro" id="IPR014729">
    <property type="entry name" value="Rossmann-like_a/b/a_fold"/>
</dbReference>
<dbReference type="NCBIfam" id="TIGR01536">
    <property type="entry name" value="asn_synth_AEB"/>
    <property type="match status" value="1"/>
</dbReference>
<dbReference type="NCBIfam" id="NF006949">
    <property type="entry name" value="PRK09431.1"/>
    <property type="match status" value="1"/>
</dbReference>
<dbReference type="PANTHER" id="PTHR11772">
    <property type="entry name" value="ASPARAGINE SYNTHETASE"/>
    <property type="match status" value="1"/>
</dbReference>
<dbReference type="PANTHER" id="PTHR11772:SF2">
    <property type="entry name" value="ASPARAGINE SYNTHETASE [GLUTAMINE-HYDROLYZING]"/>
    <property type="match status" value="1"/>
</dbReference>
<dbReference type="Pfam" id="PF00733">
    <property type="entry name" value="Asn_synthase"/>
    <property type="match status" value="1"/>
</dbReference>
<dbReference type="Pfam" id="PF13537">
    <property type="entry name" value="GATase_7"/>
    <property type="match status" value="1"/>
</dbReference>
<dbReference type="PIRSF" id="PIRSF001589">
    <property type="entry name" value="Asn_synthetase_glu-h"/>
    <property type="match status" value="1"/>
</dbReference>
<dbReference type="SUPFAM" id="SSF52402">
    <property type="entry name" value="Adenine nucleotide alpha hydrolases-like"/>
    <property type="match status" value="1"/>
</dbReference>
<dbReference type="SUPFAM" id="SSF56235">
    <property type="entry name" value="N-terminal nucleophile aminohydrolases (Ntn hydrolases)"/>
    <property type="match status" value="1"/>
</dbReference>
<dbReference type="PROSITE" id="PS51278">
    <property type="entry name" value="GATASE_TYPE_2"/>
    <property type="match status" value="1"/>
</dbReference>
<feature type="initiator methionine" description="Removed" evidence="1">
    <location>
        <position position="1"/>
    </location>
</feature>
<feature type="chain" id="PRO_0000056917" description="Asparagine synthetase [glutamine-hydrolyzing] 1">
    <location>
        <begin position="2"/>
        <end position="572"/>
    </location>
</feature>
<feature type="domain" description="Glutamine amidotransferase type-2" evidence="2">
    <location>
        <begin position="2"/>
        <end position="186"/>
    </location>
</feature>
<feature type="domain" description="Asparagine synthetase">
    <location>
        <begin position="194"/>
        <end position="546"/>
    </location>
</feature>
<feature type="active site" description="For GATase activity" evidence="1">
    <location>
        <position position="2"/>
    </location>
</feature>
<feature type="binding site" evidence="1">
    <location>
        <begin position="49"/>
        <end position="53"/>
    </location>
    <ligand>
        <name>L-glutamine</name>
        <dbReference type="ChEBI" id="CHEBI:58359"/>
    </ligand>
</feature>
<feature type="binding site" evidence="1">
    <location>
        <begin position="74"/>
        <end position="76"/>
    </location>
    <ligand>
        <name>L-glutamine</name>
        <dbReference type="ChEBI" id="CHEBI:58359"/>
    </ligand>
</feature>
<feature type="binding site" evidence="1">
    <location>
        <position position="97"/>
    </location>
    <ligand>
        <name>L-glutamine</name>
        <dbReference type="ChEBI" id="CHEBI:58359"/>
    </ligand>
</feature>
<feature type="binding site" evidence="1">
    <location>
        <position position="233"/>
    </location>
    <ligand>
        <name>ATP</name>
        <dbReference type="ChEBI" id="CHEBI:30616"/>
    </ligand>
</feature>
<feature type="binding site" evidence="1">
    <location>
        <position position="292"/>
    </location>
    <ligand>
        <name>ATP</name>
        <dbReference type="ChEBI" id="CHEBI:30616"/>
    </ligand>
</feature>
<feature type="binding site" evidence="1">
    <location>
        <begin position="366"/>
        <end position="367"/>
    </location>
    <ligand>
        <name>ATP</name>
        <dbReference type="ChEBI" id="CHEBI:30616"/>
    </ligand>
</feature>
<feature type="site" description="Important for beta-aspartyl-AMP intermediate formation" evidence="1">
    <location>
        <position position="368"/>
    </location>
</feature>
<feature type="modified residue" description="Phosphoserine" evidence="3">
    <location>
        <position position="265"/>
    </location>
</feature>
<feature type="modified residue" description="Phosphoserine" evidence="3">
    <location>
        <position position="509"/>
    </location>
</feature>
<keyword id="KW-0028">Amino-acid biosynthesis</keyword>
<keyword id="KW-0061">Asparagine biosynthesis</keyword>
<keyword id="KW-0067">ATP-binding</keyword>
<keyword id="KW-0315">Glutamine amidotransferase</keyword>
<keyword id="KW-0436">Ligase</keyword>
<keyword id="KW-0547">Nucleotide-binding</keyword>
<keyword id="KW-0597">Phosphoprotein</keyword>
<keyword id="KW-1185">Reference proteome</keyword>
<accession>P49089</accession>
<accession>D6W4E2</accession>